<feature type="chain" id="PRO_0000165977" description="Solute carrier family 23 member 1">
    <location>
        <begin position="1"/>
        <end position="604"/>
    </location>
</feature>
<feature type="topological domain" description="Cytoplasmic" evidence="3">
    <location>
        <begin position="1"/>
        <end position="59"/>
    </location>
</feature>
<feature type="transmembrane region" description="Helical" evidence="3">
    <location>
        <begin position="60"/>
        <end position="80"/>
    </location>
</feature>
<feature type="topological domain" description="Extracellular" evidence="3">
    <location>
        <begin position="81"/>
        <end position="88"/>
    </location>
</feature>
<feature type="transmembrane region" description="Helical" evidence="3">
    <location>
        <begin position="89"/>
        <end position="109"/>
    </location>
</feature>
<feature type="topological domain" description="Cytoplasmic" evidence="3">
    <location>
        <position position="110"/>
    </location>
</feature>
<feature type="transmembrane region" description="Helical" evidence="3">
    <location>
        <begin position="111"/>
        <end position="131"/>
    </location>
</feature>
<feature type="topological domain" description="Extracellular" evidence="3">
    <location>
        <begin position="132"/>
        <end position="166"/>
    </location>
</feature>
<feature type="transmembrane region" description="Helical" evidence="3">
    <location>
        <begin position="167"/>
        <end position="187"/>
    </location>
</feature>
<feature type="topological domain" description="Cytoplasmic" evidence="3">
    <location>
        <begin position="188"/>
        <end position="214"/>
    </location>
</feature>
<feature type="transmembrane region" description="Helical" evidence="3">
    <location>
        <begin position="215"/>
        <end position="232"/>
    </location>
</feature>
<feature type="topological domain" description="Extracellular" evidence="3">
    <location>
        <begin position="233"/>
        <end position="236"/>
    </location>
</feature>
<feature type="intramembrane region" description="Helical" evidence="3">
    <location>
        <begin position="237"/>
        <end position="250"/>
    </location>
</feature>
<feature type="topological domain" description="Extracellular" evidence="3">
    <location>
        <begin position="251"/>
        <end position="257"/>
    </location>
</feature>
<feature type="transmembrane region" description="Helical" evidence="3">
    <location>
        <begin position="258"/>
        <end position="278"/>
    </location>
</feature>
<feature type="topological domain" description="Cytoplasmic" evidence="3">
    <location>
        <begin position="279"/>
        <end position="319"/>
    </location>
</feature>
<feature type="transmembrane region" description="Helical" evidence="3">
    <location>
        <begin position="320"/>
        <end position="340"/>
    </location>
</feature>
<feature type="topological domain" description="Extracellular" evidence="3">
    <location>
        <begin position="341"/>
        <end position="365"/>
    </location>
</feature>
<feature type="transmembrane region" description="Helical" evidence="3">
    <location>
        <begin position="366"/>
        <end position="386"/>
    </location>
</feature>
<feature type="topological domain" description="Cytoplasmic" evidence="3">
    <location>
        <begin position="387"/>
        <end position="409"/>
    </location>
</feature>
<feature type="transmembrane region" description="Helical" evidence="3">
    <location>
        <begin position="410"/>
        <end position="430"/>
    </location>
</feature>
<feature type="topological domain" description="Extracellular" evidence="3">
    <location>
        <begin position="431"/>
        <end position="433"/>
    </location>
</feature>
<feature type="transmembrane region" description="Helical" evidence="3">
    <location>
        <begin position="434"/>
        <end position="454"/>
    </location>
</feature>
<feature type="topological domain" description="Cytoplasmic" evidence="3">
    <location>
        <begin position="455"/>
        <end position="464"/>
    </location>
</feature>
<feature type="transmembrane region" description="Helical" evidence="3">
    <location>
        <begin position="465"/>
        <end position="485"/>
    </location>
</feature>
<feature type="topological domain" description="Extracellular" evidence="3">
    <location>
        <begin position="486"/>
        <end position="497"/>
    </location>
</feature>
<feature type="transmembrane region" description="Helical" evidence="3">
    <location>
        <begin position="498"/>
        <end position="518"/>
    </location>
</feature>
<feature type="topological domain" description="Cytoplasmic" evidence="3">
    <location>
        <begin position="519"/>
        <end position="604"/>
    </location>
</feature>
<feature type="region of interest" description="Disordered" evidence="4">
    <location>
        <begin position="1"/>
        <end position="29"/>
    </location>
</feature>
<feature type="modified residue" description="Phosphothreonine" evidence="2">
    <location>
        <position position="597"/>
    </location>
</feature>
<feature type="modified residue" description="Phosphoserine" evidence="2">
    <location>
        <position position="599"/>
    </location>
</feature>
<feature type="modified residue" description="Phosphothreonine" evidence="2">
    <location>
        <position position="602"/>
    </location>
</feature>
<feature type="glycosylation site" description="N-linked (GlcNAc...) asparagine" evidence="3">
    <location>
        <position position="145"/>
    </location>
</feature>
<feature type="glycosylation site" description="N-linked (GlcNAc...) asparagine" evidence="3">
    <location>
        <position position="151"/>
    </location>
</feature>
<sequence>MKAQEDPGSSKQHECPDSAGTSTRDQQAPLPAEPKFDMLYKIEDVPPWYLCILLGFQHYLTCFSGTIAVPFLLAEALCVGRDQHMISQLIGTIFTCVGITTLIQTTVGIRLPLFQASAFAFLVPAKAILALERWKCPPEEEIYGNWSMPLNTSHIWHPRIREVQGAIMVSSVVEVVIGLLGLPGALLSYIGPLTVTPTVSLIGLSVFQAAGDRAGSHWGISACSILLIVLFSQYLRNLTFLLPVYRWGKGLTLFRIQIFKMFPIVLAIMTVWLLCYVLTLTDVLPADPTVYGFQARTDARGDIMAISPWIRIPYPCQWGLPTVTVAAVLGMFSATLAGIIESIGDYYACARLAGAPPPPVHAINRGIFTEGVCCIIAGLLGTGNGSTSSSPNIGVLGITKVGSRRVVQYGAGIMLILGAIGKFTALFASLPDPILGGMFCTLFGMITAVGLSNLQFVDMNSSRNLFVLGFSMFFGLTLPNYLDSNPGAINTGVPEVDQILTVLLTTEMFVGGCLAFILDNTVPGSPEERGLIQWKAGAHANSETLASLKSYDFPFGMGMVKRTTFFRYIPICPVFRGFSKTENQPAVLEDAPDNTETGSVCTKV</sequence>
<name>S23A1_RAT</name>
<dbReference type="EMBL" id="AF080452">
    <property type="protein sequence ID" value="AAD30367.1"/>
    <property type="molecule type" value="mRNA"/>
</dbReference>
<dbReference type="EMBL" id="BC078851">
    <property type="protein sequence ID" value="AAH78851.1"/>
    <property type="molecule type" value="mRNA"/>
</dbReference>
<dbReference type="RefSeq" id="NP_059011.1">
    <property type="nucleotide sequence ID" value="NM_017315.2"/>
</dbReference>
<dbReference type="SMR" id="Q9WTW7"/>
<dbReference type="FunCoup" id="Q9WTW7">
    <property type="interactions" value="96"/>
</dbReference>
<dbReference type="STRING" id="10116.ENSRNOP00000073343"/>
<dbReference type="TCDB" id="2.A.40.6.1">
    <property type="family name" value="the nucleobase/ascorbate transporter (nat) or nucleobase:cation symporter-2 (ncs2) family"/>
</dbReference>
<dbReference type="GlyCosmos" id="Q9WTW7">
    <property type="glycosylation" value="2 sites, No reported glycans"/>
</dbReference>
<dbReference type="GlyGen" id="Q9WTW7">
    <property type="glycosylation" value="3 sites"/>
</dbReference>
<dbReference type="iPTMnet" id="Q9WTW7"/>
<dbReference type="PhosphoSitePlus" id="Q9WTW7"/>
<dbReference type="PaxDb" id="10116-ENSRNOP00000027048"/>
<dbReference type="GeneID" id="50621"/>
<dbReference type="KEGG" id="rno:50621"/>
<dbReference type="UCSC" id="RGD:619875">
    <property type="organism name" value="rat"/>
</dbReference>
<dbReference type="AGR" id="RGD:619875"/>
<dbReference type="CTD" id="9963"/>
<dbReference type="RGD" id="619875">
    <property type="gene designation" value="Slc23a1"/>
</dbReference>
<dbReference type="VEuPathDB" id="HostDB:ENSRNOG00000061695"/>
<dbReference type="eggNOG" id="KOG1292">
    <property type="taxonomic scope" value="Eukaryota"/>
</dbReference>
<dbReference type="HOGENOM" id="CLU_017959_5_4_1"/>
<dbReference type="InParanoid" id="Q9WTW7"/>
<dbReference type="OrthoDB" id="1641903at2759"/>
<dbReference type="PhylomeDB" id="Q9WTW7"/>
<dbReference type="TreeFam" id="TF313272"/>
<dbReference type="Reactome" id="R-RNO-196836">
    <property type="pathway name" value="Vitamin C (ascorbate) metabolism"/>
</dbReference>
<dbReference type="PRO" id="PR:Q9WTW7"/>
<dbReference type="Proteomes" id="UP000002494">
    <property type="component" value="Chromosome 18"/>
</dbReference>
<dbReference type="Bgee" id="ENSRNOG00000061695">
    <property type="expression patterns" value="Expressed in adult mammalian kidney and 12 other cell types or tissues"/>
</dbReference>
<dbReference type="ExpressionAtlas" id="Q9WTW7">
    <property type="expression patterns" value="baseline and differential"/>
</dbReference>
<dbReference type="GO" id="GO:0016324">
    <property type="term" value="C:apical plasma membrane"/>
    <property type="evidence" value="ECO:0000250"/>
    <property type="project" value="UniProtKB"/>
</dbReference>
<dbReference type="GO" id="GO:0009925">
    <property type="term" value="C:basal plasma membrane"/>
    <property type="evidence" value="ECO:0000314"/>
    <property type="project" value="UniProtKB"/>
</dbReference>
<dbReference type="GO" id="GO:0005903">
    <property type="term" value="C:brush border"/>
    <property type="evidence" value="ECO:0000314"/>
    <property type="project" value="UniProtKB"/>
</dbReference>
<dbReference type="GO" id="GO:0005737">
    <property type="term" value="C:cytoplasm"/>
    <property type="evidence" value="ECO:0000314"/>
    <property type="project" value="UniProtKB"/>
</dbReference>
<dbReference type="GO" id="GO:0043229">
    <property type="term" value="C:intracellular organelle"/>
    <property type="evidence" value="ECO:0000250"/>
    <property type="project" value="UniProtKB"/>
</dbReference>
<dbReference type="GO" id="GO:0005886">
    <property type="term" value="C:plasma membrane"/>
    <property type="evidence" value="ECO:0000266"/>
    <property type="project" value="RGD"/>
</dbReference>
<dbReference type="GO" id="GO:0033300">
    <property type="term" value="F:dehydroascorbic acid transmembrane transporter activity"/>
    <property type="evidence" value="ECO:0000250"/>
    <property type="project" value="UniProtKB"/>
</dbReference>
<dbReference type="GO" id="GO:0008520">
    <property type="term" value="F:L-ascorbate:sodium symporter activity"/>
    <property type="evidence" value="ECO:0000314"/>
    <property type="project" value="RGD"/>
</dbReference>
<dbReference type="GO" id="GO:0015229">
    <property type="term" value="F:L-ascorbic acid transmembrane transporter activity"/>
    <property type="evidence" value="ECO:0000314"/>
    <property type="project" value="UniProtKB"/>
</dbReference>
<dbReference type="GO" id="GO:0015081">
    <property type="term" value="F:sodium ion transmembrane transporter activity"/>
    <property type="evidence" value="ECO:0000250"/>
    <property type="project" value="UniProtKB"/>
</dbReference>
<dbReference type="GO" id="GO:0015143">
    <property type="term" value="F:urate transmembrane transporter activity"/>
    <property type="evidence" value="ECO:0000250"/>
    <property type="project" value="UniProtKB"/>
</dbReference>
<dbReference type="GO" id="GO:0007420">
    <property type="term" value="P:brain development"/>
    <property type="evidence" value="ECO:0000250"/>
    <property type="project" value="UniProtKB"/>
</dbReference>
<dbReference type="GO" id="GO:0070837">
    <property type="term" value="P:dehydroascorbic acid transport"/>
    <property type="evidence" value="ECO:0000250"/>
    <property type="project" value="UniProtKB"/>
</dbReference>
<dbReference type="GO" id="GO:0015882">
    <property type="term" value="P:L-ascorbic acid transmembrane transport"/>
    <property type="evidence" value="ECO:0000314"/>
    <property type="project" value="UniProtKB"/>
</dbReference>
<dbReference type="GO" id="GO:0030324">
    <property type="term" value="P:lung development"/>
    <property type="evidence" value="ECO:0000266"/>
    <property type="project" value="RGD"/>
</dbReference>
<dbReference type="GO" id="GO:0009636">
    <property type="term" value="P:response to toxic substance"/>
    <property type="evidence" value="ECO:0000250"/>
    <property type="project" value="UniProtKB"/>
</dbReference>
<dbReference type="GO" id="GO:0006814">
    <property type="term" value="P:sodium ion transport"/>
    <property type="evidence" value="ECO:0000250"/>
    <property type="project" value="UniProtKB"/>
</dbReference>
<dbReference type="InterPro" id="IPR006043">
    <property type="entry name" value="NCS2"/>
</dbReference>
<dbReference type="PANTHER" id="PTHR11119">
    <property type="entry name" value="XANTHINE-URACIL / VITAMIN C PERMEASE FAMILY MEMBER"/>
    <property type="match status" value="1"/>
</dbReference>
<dbReference type="Pfam" id="PF00860">
    <property type="entry name" value="Xan_ur_permease"/>
    <property type="match status" value="1"/>
</dbReference>
<protein>
    <recommendedName>
        <fullName>Solute carrier family 23 member 1</fullName>
    </recommendedName>
    <alternativeName>
        <fullName>Na(+)/L-ascorbic acid transporter 1</fullName>
    </alternativeName>
    <alternativeName>
        <fullName evidence="6">Sodium-dependent vitamin C transporter 1</fullName>
    </alternativeName>
</protein>
<comment type="function">
    <text evidence="1 5">Sodium/ascorbate cotransporter. Mediates electrogenic uptake of vitamin C, with a stoichiometry of 2 Na(+) for each ascorbate (PubMed:10331392). Has retained some ancestral activity toward nucleobases such as urate, an oxidized purine. Low-affinity high-capacity sodium:urate cotransporter, may regulate serum urate levels by serving as a renal urate re-absorber (By similarity).</text>
</comment>
<comment type="catalytic activity">
    <reaction evidence="1">
        <text>L-ascorbate(out) + 2 Na(+)(out) = L-ascorbate(in) + 2 Na(+)(in)</text>
        <dbReference type="Rhea" id="RHEA:69883"/>
        <dbReference type="ChEBI" id="CHEBI:29101"/>
        <dbReference type="ChEBI" id="CHEBI:38290"/>
    </reaction>
    <physiologicalReaction direction="left-to-right" evidence="1">
        <dbReference type="Rhea" id="RHEA:69884"/>
    </physiologicalReaction>
</comment>
<comment type="catalytic activity">
    <reaction evidence="1">
        <text>urate(out) + 2 Na(+)(out) = urate(in) + 2 Na(+)(in)</text>
        <dbReference type="Rhea" id="RHEA:76339"/>
        <dbReference type="ChEBI" id="CHEBI:17775"/>
        <dbReference type="ChEBI" id="CHEBI:29101"/>
    </reaction>
    <physiologicalReaction direction="left-to-right" evidence="1">
        <dbReference type="Rhea" id="RHEA:76340"/>
    </physiologicalReaction>
</comment>
<comment type="subcellular location">
    <subcellularLocation>
        <location evidence="1">Cell membrane</location>
        <topology evidence="1">Multi-pass membrane protein</topology>
    </subcellularLocation>
</comment>
<comment type="tissue specificity">
    <text evidence="5">Highly expressed in the straight segment of proximal tubules in the kidney, in intestine and liver. Detected in epithelial cells of the bronchiole and epididymis.</text>
</comment>
<comment type="PTM">
    <text evidence="1">Phosphorylated.</text>
</comment>
<comment type="similarity">
    <text evidence="7">Belongs to the nucleobase:cation symporter-2 (NCS2) (TC 2.A.40) family.</text>
</comment>
<accession>Q9WTW7</accession>
<organism>
    <name type="scientific">Rattus norvegicus</name>
    <name type="common">Rat</name>
    <dbReference type="NCBI Taxonomy" id="10116"/>
    <lineage>
        <taxon>Eukaryota</taxon>
        <taxon>Metazoa</taxon>
        <taxon>Chordata</taxon>
        <taxon>Craniata</taxon>
        <taxon>Vertebrata</taxon>
        <taxon>Euteleostomi</taxon>
        <taxon>Mammalia</taxon>
        <taxon>Eutheria</taxon>
        <taxon>Euarchontoglires</taxon>
        <taxon>Glires</taxon>
        <taxon>Rodentia</taxon>
        <taxon>Myomorpha</taxon>
        <taxon>Muroidea</taxon>
        <taxon>Muridae</taxon>
        <taxon>Murinae</taxon>
        <taxon>Rattus</taxon>
    </lineage>
</organism>
<reference key="1">
    <citation type="journal article" date="1999" name="Nature">
        <title>A family of mammalian Na+-dependent L-ascorbic acid transporters.</title>
        <authorList>
            <person name="Tsukaguchi H."/>
            <person name="Tokui T."/>
            <person name="Mackenzie B."/>
            <person name="Berger U.V."/>
            <person name="Chen X.-Z."/>
            <person name="Wang Y."/>
            <person name="Brubaker R.F."/>
            <person name="Hediger M.A."/>
        </authorList>
    </citation>
    <scope>NUCLEOTIDE SEQUENCE [MRNA]</scope>
    <scope>FUNCTION</scope>
    <scope>TISSUE SPECIFICITY</scope>
    <source>
        <strain>Sprague-Dawley</strain>
        <tissue>Kidney</tissue>
    </source>
</reference>
<reference key="2">
    <citation type="journal article" date="2004" name="Genome Res.">
        <title>The status, quality, and expansion of the NIH full-length cDNA project: the Mammalian Gene Collection (MGC).</title>
        <authorList>
            <consortium name="The MGC Project Team"/>
        </authorList>
    </citation>
    <scope>NUCLEOTIDE SEQUENCE [LARGE SCALE MRNA]</scope>
    <source>
        <tissue>Kidney</tissue>
    </source>
</reference>
<gene>
    <name type="primary">Slc23a1</name>
    <name evidence="6" type="synonym">Svct1</name>
</gene>
<proteinExistence type="evidence at transcript level"/>
<evidence type="ECO:0000250" key="1">
    <source>
        <dbReference type="UniProtKB" id="Q9UHI7"/>
    </source>
</evidence>
<evidence type="ECO:0000250" key="2">
    <source>
        <dbReference type="UniProtKB" id="Q9Z2J0"/>
    </source>
</evidence>
<evidence type="ECO:0000255" key="3"/>
<evidence type="ECO:0000256" key="4">
    <source>
        <dbReference type="SAM" id="MobiDB-lite"/>
    </source>
</evidence>
<evidence type="ECO:0000269" key="5">
    <source>
    </source>
</evidence>
<evidence type="ECO:0000303" key="6">
    <source>
    </source>
</evidence>
<evidence type="ECO:0000305" key="7"/>
<keyword id="KW-1003">Cell membrane</keyword>
<keyword id="KW-0325">Glycoprotein</keyword>
<keyword id="KW-0406">Ion transport</keyword>
<keyword id="KW-0472">Membrane</keyword>
<keyword id="KW-0597">Phosphoprotein</keyword>
<keyword id="KW-1185">Reference proteome</keyword>
<keyword id="KW-0915">Sodium</keyword>
<keyword id="KW-0739">Sodium transport</keyword>
<keyword id="KW-0769">Symport</keyword>
<keyword id="KW-0812">Transmembrane</keyword>
<keyword id="KW-1133">Transmembrane helix</keyword>
<keyword id="KW-0813">Transport</keyword>